<dbReference type="EC" id="1.3.3.6" evidence="9 12 15 28"/>
<dbReference type="EMBL" id="U03268">
    <property type="protein sequence ID" value="AAA19113.1"/>
    <property type="molecule type" value="Genomic_DNA"/>
</dbReference>
<dbReference type="EMBL" id="U03254">
    <property type="protein sequence ID" value="AAA19113.1"/>
    <property type="status" value="JOINED"/>
    <property type="molecule type" value="Genomic_DNA"/>
</dbReference>
<dbReference type="EMBL" id="U03255">
    <property type="protein sequence ID" value="AAA19113.1"/>
    <property type="status" value="JOINED"/>
    <property type="molecule type" value="Genomic_DNA"/>
</dbReference>
<dbReference type="EMBL" id="U03256">
    <property type="protein sequence ID" value="AAA19113.1"/>
    <property type="status" value="JOINED"/>
    <property type="molecule type" value="Genomic_DNA"/>
</dbReference>
<dbReference type="EMBL" id="U03258">
    <property type="protein sequence ID" value="AAA19113.1"/>
    <property type="status" value="JOINED"/>
    <property type="molecule type" value="Genomic_DNA"/>
</dbReference>
<dbReference type="EMBL" id="U03259">
    <property type="protein sequence ID" value="AAA19113.1"/>
    <property type="status" value="JOINED"/>
    <property type="molecule type" value="Genomic_DNA"/>
</dbReference>
<dbReference type="EMBL" id="U03260">
    <property type="protein sequence ID" value="AAA19113.1"/>
    <property type="status" value="JOINED"/>
    <property type="molecule type" value="Genomic_DNA"/>
</dbReference>
<dbReference type="EMBL" id="U03261">
    <property type="protein sequence ID" value="AAA19113.1"/>
    <property type="status" value="JOINED"/>
    <property type="molecule type" value="Genomic_DNA"/>
</dbReference>
<dbReference type="EMBL" id="U03263">
    <property type="protein sequence ID" value="AAA19113.1"/>
    <property type="status" value="JOINED"/>
    <property type="molecule type" value="Genomic_DNA"/>
</dbReference>
<dbReference type="EMBL" id="U03264">
    <property type="protein sequence ID" value="AAA19113.1"/>
    <property type="status" value="JOINED"/>
    <property type="molecule type" value="Genomic_DNA"/>
</dbReference>
<dbReference type="EMBL" id="U03265">
    <property type="protein sequence ID" value="AAA19113.1"/>
    <property type="status" value="JOINED"/>
    <property type="molecule type" value="Genomic_DNA"/>
</dbReference>
<dbReference type="EMBL" id="U03266">
    <property type="protein sequence ID" value="AAA19113.1"/>
    <property type="status" value="JOINED"/>
    <property type="molecule type" value="Genomic_DNA"/>
</dbReference>
<dbReference type="EMBL" id="U03267">
    <property type="protein sequence ID" value="AAA19113.1"/>
    <property type="status" value="JOINED"/>
    <property type="molecule type" value="Genomic_DNA"/>
</dbReference>
<dbReference type="EMBL" id="U03268">
    <property type="protein sequence ID" value="AAA19114.1"/>
    <property type="molecule type" value="Genomic_DNA"/>
</dbReference>
<dbReference type="EMBL" id="U03254">
    <property type="protein sequence ID" value="AAA19114.1"/>
    <property type="status" value="JOINED"/>
    <property type="molecule type" value="Genomic_DNA"/>
</dbReference>
<dbReference type="EMBL" id="U03255">
    <property type="protein sequence ID" value="AAA19114.1"/>
    <property type="status" value="JOINED"/>
    <property type="molecule type" value="Genomic_DNA"/>
</dbReference>
<dbReference type="EMBL" id="U03257">
    <property type="protein sequence ID" value="AAA19114.1"/>
    <property type="status" value="JOINED"/>
    <property type="molecule type" value="Genomic_DNA"/>
</dbReference>
<dbReference type="EMBL" id="U03258">
    <property type="protein sequence ID" value="AAA19114.1"/>
    <property type="status" value="JOINED"/>
    <property type="molecule type" value="Genomic_DNA"/>
</dbReference>
<dbReference type="EMBL" id="U03259">
    <property type="protein sequence ID" value="AAA19114.1"/>
    <property type="status" value="JOINED"/>
    <property type="molecule type" value="Genomic_DNA"/>
</dbReference>
<dbReference type="EMBL" id="U03260">
    <property type="protein sequence ID" value="AAA19114.1"/>
    <property type="status" value="JOINED"/>
    <property type="molecule type" value="Genomic_DNA"/>
</dbReference>
<dbReference type="EMBL" id="U03261">
    <property type="protein sequence ID" value="AAA19114.1"/>
    <property type="status" value="JOINED"/>
    <property type="molecule type" value="Genomic_DNA"/>
</dbReference>
<dbReference type="EMBL" id="U03263">
    <property type="protein sequence ID" value="AAA19114.1"/>
    <property type="status" value="JOINED"/>
    <property type="molecule type" value="Genomic_DNA"/>
</dbReference>
<dbReference type="EMBL" id="U03264">
    <property type="protein sequence ID" value="AAA19114.1"/>
    <property type="status" value="JOINED"/>
    <property type="molecule type" value="Genomic_DNA"/>
</dbReference>
<dbReference type="EMBL" id="U03265">
    <property type="protein sequence ID" value="AAA19114.1"/>
    <property type="status" value="JOINED"/>
    <property type="molecule type" value="Genomic_DNA"/>
</dbReference>
<dbReference type="EMBL" id="U03266">
    <property type="protein sequence ID" value="AAA19114.1"/>
    <property type="status" value="JOINED"/>
    <property type="molecule type" value="Genomic_DNA"/>
</dbReference>
<dbReference type="EMBL" id="U03267">
    <property type="protein sequence ID" value="AAA19114.1"/>
    <property type="status" value="JOINED"/>
    <property type="molecule type" value="Genomic_DNA"/>
</dbReference>
<dbReference type="EMBL" id="U07866">
    <property type="protein sequence ID" value="AAA18595.1"/>
    <property type="molecule type" value="mRNA"/>
</dbReference>
<dbReference type="EMBL" id="X71440">
    <property type="protein sequence ID" value="CAA50574.1"/>
    <property type="molecule type" value="mRNA"/>
</dbReference>
<dbReference type="EMBL" id="S69189">
    <property type="protein sequence ID" value="AAB30019.2"/>
    <property type="molecule type" value="mRNA"/>
</dbReference>
<dbReference type="EMBL" id="AK291793">
    <property type="protein sequence ID" value="BAF84482.1"/>
    <property type="molecule type" value="mRNA"/>
</dbReference>
<dbReference type="EMBL" id="AK292965">
    <property type="protein sequence ID" value="BAF85654.1"/>
    <property type="molecule type" value="mRNA"/>
</dbReference>
<dbReference type="EMBL" id="AK296409">
    <property type="protein sequence ID" value="BAG59073.1"/>
    <property type="molecule type" value="mRNA"/>
</dbReference>
<dbReference type="EMBL" id="BX537380">
    <property type="protein sequence ID" value="CAD97622.1"/>
    <property type="status" value="ALT_INIT"/>
    <property type="molecule type" value="mRNA"/>
</dbReference>
<dbReference type="EMBL" id="AC040980">
    <property type="status" value="NOT_ANNOTATED_CDS"/>
    <property type="molecule type" value="Genomic_DNA"/>
</dbReference>
<dbReference type="EMBL" id="AC087289">
    <property type="status" value="NOT_ANNOTATED_CDS"/>
    <property type="molecule type" value="Genomic_DNA"/>
</dbReference>
<dbReference type="EMBL" id="CH471099">
    <property type="protein sequence ID" value="EAW89351.1"/>
    <property type="molecule type" value="Genomic_DNA"/>
</dbReference>
<dbReference type="EMBL" id="BC008767">
    <property type="protein sequence ID" value="AAH08767.1"/>
    <property type="molecule type" value="mRNA"/>
</dbReference>
<dbReference type="EMBL" id="BC010425">
    <property type="protein sequence ID" value="AAH10425.1"/>
    <property type="molecule type" value="mRNA"/>
</dbReference>
<dbReference type="CCDS" id="CCDS11734.1">
    <molecule id="Q15067-2"/>
</dbReference>
<dbReference type="CCDS" id="CCDS11735.1">
    <molecule id="Q15067-1"/>
</dbReference>
<dbReference type="PIR" id="A54942">
    <property type="entry name" value="A54942"/>
</dbReference>
<dbReference type="PIR" id="B54942">
    <property type="entry name" value="B54942"/>
</dbReference>
<dbReference type="PIR" id="I38095">
    <property type="entry name" value="I38095"/>
</dbReference>
<dbReference type="RefSeq" id="NP_001171968.1">
    <molecule id="Q15067-3"/>
    <property type="nucleotide sequence ID" value="NM_001185039.2"/>
</dbReference>
<dbReference type="RefSeq" id="NP_004026.2">
    <molecule id="Q15067-2"/>
    <property type="nucleotide sequence ID" value="NM_004035.6"/>
</dbReference>
<dbReference type="RefSeq" id="NP_009223.2">
    <molecule id="Q15067-1"/>
    <property type="nucleotide sequence ID" value="NM_007292.5"/>
</dbReference>
<dbReference type="SMR" id="Q15067"/>
<dbReference type="BioGRID" id="106567">
    <property type="interactions" value="115"/>
</dbReference>
<dbReference type="FunCoup" id="Q15067">
    <property type="interactions" value="1801"/>
</dbReference>
<dbReference type="IntAct" id="Q15067">
    <property type="interactions" value="55"/>
</dbReference>
<dbReference type="STRING" id="9606.ENSP00000293217"/>
<dbReference type="BindingDB" id="Q15067"/>
<dbReference type="ChEMBL" id="CHEMBL4105748"/>
<dbReference type="DrugBank" id="DB07930">
    <property type="generic name" value="(3R)-3-HYDROXYDODECANOIC ACID"/>
</dbReference>
<dbReference type="DrugBank" id="DB03147">
    <property type="generic name" value="Flavin adenine dinucleotide"/>
</dbReference>
<dbReference type="DrugBank" id="DB09328">
    <property type="generic name" value="Vayarin"/>
</dbReference>
<dbReference type="DrugCentral" id="Q15067"/>
<dbReference type="SwissLipids" id="SLP:000000536">
    <molecule id="Q15067-1"/>
</dbReference>
<dbReference type="SwissLipids" id="SLP:000000537">
    <molecule id="Q15067-2"/>
</dbReference>
<dbReference type="GlyGen" id="Q15067">
    <property type="glycosylation" value="1 site, 1 O-linked glycan (1 site)"/>
</dbReference>
<dbReference type="iPTMnet" id="Q15067"/>
<dbReference type="PhosphoSitePlus" id="Q15067"/>
<dbReference type="SwissPalm" id="Q15067"/>
<dbReference type="BioMuta" id="ACOX1"/>
<dbReference type="DMDM" id="126302511"/>
<dbReference type="jPOST" id="Q15067"/>
<dbReference type="MassIVE" id="Q15067"/>
<dbReference type="PaxDb" id="9606-ENSP00000293217"/>
<dbReference type="PeptideAtlas" id="Q15067"/>
<dbReference type="PRIDE" id="Q15067"/>
<dbReference type="ProteomicsDB" id="24812"/>
<dbReference type="ProteomicsDB" id="60421">
    <molecule id="Q15067-1"/>
</dbReference>
<dbReference type="ProteomicsDB" id="60422">
    <molecule id="Q15067-2"/>
</dbReference>
<dbReference type="Pumba" id="Q15067"/>
<dbReference type="TopDownProteomics" id="Q15067-1">
    <molecule id="Q15067-1"/>
</dbReference>
<dbReference type="Antibodypedia" id="19646">
    <property type="antibodies" value="380 antibodies from 31 providers"/>
</dbReference>
<dbReference type="DNASU" id="51"/>
<dbReference type="Ensembl" id="ENST00000293217.10">
    <molecule id="Q15067-2"/>
    <property type="protein sequence ID" value="ENSP00000293217.4"/>
    <property type="gene ID" value="ENSG00000161533.12"/>
</dbReference>
<dbReference type="Ensembl" id="ENST00000301608.9">
    <molecule id="Q15067-1"/>
    <property type="protein sequence ID" value="ENSP00000301608.4"/>
    <property type="gene ID" value="ENSG00000161533.12"/>
</dbReference>
<dbReference type="GeneID" id="51"/>
<dbReference type="KEGG" id="hsa:51"/>
<dbReference type="MANE-Select" id="ENST00000293217.10">
    <molecule id="Q15067-2"/>
    <property type="protein sequence ID" value="ENSP00000293217.4"/>
    <property type="RefSeq nucleotide sequence ID" value="NM_004035.7"/>
    <property type="RefSeq protein sequence ID" value="NP_004026.2"/>
</dbReference>
<dbReference type="UCSC" id="uc002jqe.5">
    <molecule id="Q15067-1"/>
    <property type="organism name" value="human"/>
</dbReference>
<dbReference type="AGR" id="HGNC:119"/>
<dbReference type="CTD" id="51"/>
<dbReference type="DisGeNET" id="51"/>
<dbReference type="GeneCards" id="ACOX1"/>
<dbReference type="HGNC" id="HGNC:119">
    <property type="gene designation" value="ACOX1"/>
</dbReference>
<dbReference type="HPA" id="ENSG00000161533">
    <property type="expression patterns" value="Tissue enhanced (liver)"/>
</dbReference>
<dbReference type="MalaCards" id="ACOX1"/>
<dbReference type="MIM" id="264470">
    <property type="type" value="phenotype"/>
</dbReference>
<dbReference type="MIM" id="609751">
    <property type="type" value="gene"/>
</dbReference>
<dbReference type="MIM" id="618960">
    <property type="type" value="phenotype"/>
</dbReference>
<dbReference type="neXtProt" id="NX_Q15067"/>
<dbReference type="OpenTargets" id="ENSG00000161533"/>
<dbReference type="Orphanet" id="631248">
    <property type="disease" value="Mitchell Syndrome"/>
</dbReference>
<dbReference type="Orphanet" id="2971">
    <property type="disease" value="Peroxisomal acyl-CoA oxidase deficiency"/>
</dbReference>
<dbReference type="PharmGKB" id="PA21"/>
<dbReference type="VEuPathDB" id="HostDB:ENSG00000161533"/>
<dbReference type="eggNOG" id="KOG0136">
    <property type="taxonomic scope" value="Eukaryota"/>
</dbReference>
<dbReference type="GeneTree" id="ENSGT00940000157287"/>
<dbReference type="HOGENOM" id="CLU_014629_3_1_1"/>
<dbReference type="InParanoid" id="Q15067"/>
<dbReference type="OMA" id="AHAQYMV"/>
<dbReference type="OrthoDB" id="538336at2759"/>
<dbReference type="PAN-GO" id="Q15067">
    <property type="GO annotations" value="7 GO annotations based on evolutionary models"/>
</dbReference>
<dbReference type="PhylomeDB" id="Q15067"/>
<dbReference type="TreeFam" id="TF300672"/>
<dbReference type="BioCyc" id="MetaCyc:HS08589-MONOMER"/>
<dbReference type="BRENDA" id="1.3.3.6">
    <property type="organism ID" value="2681"/>
</dbReference>
<dbReference type="PathwayCommons" id="Q15067"/>
<dbReference type="Reactome" id="R-HSA-1989781">
    <molecule id="Q15067-1"/>
    <property type="pathway name" value="PPARA activates gene expression"/>
</dbReference>
<dbReference type="Reactome" id="R-HSA-2046106">
    <molecule id="Q15067-2"/>
    <property type="pathway name" value="alpha-linolenic acid (ALA) metabolism"/>
</dbReference>
<dbReference type="Reactome" id="R-HSA-390247">
    <molecule id="Q15067-2"/>
    <property type="pathway name" value="Beta-oxidation of very long chain fatty acids"/>
</dbReference>
<dbReference type="Reactome" id="R-HSA-9033241">
    <property type="pathway name" value="Peroxisomal protein import"/>
</dbReference>
<dbReference type="Reactome" id="R-HSA-9033500">
    <property type="pathway name" value="TYSND1 cleaves peroxisomal proteins"/>
</dbReference>
<dbReference type="SABIO-RK" id="Q15067"/>
<dbReference type="SignaLink" id="Q15067"/>
<dbReference type="SIGNOR" id="Q15067"/>
<dbReference type="UniPathway" id="UPA00661"/>
<dbReference type="BioGRID-ORCS" id="51">
    <property type="hits" value="62 hits in 1169 CRISPR screens"/>
</dbReference>
<dbReference type="ChiTaRS" id="ACOX1">
    <property type="organism name" value="human"/>
</dbReference>
<dbReference type="GeneWiki" id="ACOX1"/>
<dbReference type="GenomeRNAi" id="51"/>
<dbReference type="Pharos" id="Q15067">
    <property type="development level" value="Tchem"/>
</dbReference>
<dbReference type="PRO" id="PR:Q15067"/>
<dbReference type="Proteomes" id="UP000005640">
    <property type="component" value="Chromosome 17"/>
</dbReference>
<dbReference type="RNAct" id="Q15067">
    <property type="molecule type" value="protein"/>
</dbReference>
<dbReference type="Bgee" id="ENSG00000161533">
    <property type="expression patterns" value="Expressed in jejunal mucosa and 204 other cell types or tissues"/>
</dbReference>
<dbReference type="ExpressionAtlas" id="Q15067">
    <property type="expression patterns" value="baseline and differential"/>
</dbReference>
<dbReference type="GO" id="GO:0005829">
    <property type="term" value="C:cytosol"/>
    <property type="evidence" value="ECO:0000304"/>
    <property type="project" value="Reactome"/>
</dbReference>
<dbReference type="GO" id="GO:0016020">
    <property type="term" value="C:membrane"/>
    <property type="evidence" value="ECO:0007005"/>
    <property type="project" value="UniProtKB"/>
</dbReference>
<dbReference type="GO" id="GO:0005782">
    <property type="term" value="C:peroxisomal matrix"/>
    <property type="evidence" value="ECO:0000304"/>
    <property type="project" value="Reactome"/>
</dbReference>
<dbReference type="GO" id="GO:0005778">
    <property type="term" value="C:peroxisomal membrane"/>
    <property type="evidence" value="ECO:0007669"/>
    <property type="project" value="Ensembl"/>
</dbReference>
<dbReference type="GO" id="GO:0005777">
    <property type="term" value="C:peroxisome"/>
    <property type="evidence" value="ECO:0000314"/>
    <property type="project" value="UniProtKB"/>
</dbReference>
<dbReference type="GO" id="GO:0003997">
    <property type="term" value="F:acyl-CoA oxidase activity"/>
    <property type="evidence" value="ECO:0000314"/>
    <property type="project" value="UniProtKB"/>
</dbReference>
<dbReference type="GO" id="GO:0071949">
    <property type="term" value="F:FAD binding"/>
    <property type="evidence" value="ECO:0000314"/>
    <property type="project" value="UniProtKB"/>
</dbReference>
<dbReference type="GO" id="GO:0005504">
    <property type="term" value="F:fatty acid binding"/>
    <property type="evidence" value="ECO:0000318"/>
    <property type="project" value="GO_Central"/>
</dbReference>
<dbReference type="GO" id="GO:0050660">
    <property type="term" value="F:flavin adenine dinucleotide binding"/>
    <property type="evidence" value="ECO:0000318"/>
    <property type="project" value="GO_Central"/>
</dbReference>
<dbReference type="GO" id="GO:0016401">
    <property type="term" value="F:palmitoyl-CoA oxidase activity"/>
    <property type="evidence" value="ECO:0000314"/>
    <property type="project" value="UniProtKB"/>
</dbReference>
<dbReference type="GO" id="GO:0030165">
    <property type="term" value="F:PDZ domain binding"/>
    <property type="evidence" value="ECO:0000314"/>
    <property type="project" value="MGI"/>
</dbReference>
<dbReference type="GO" id="GO:0042803">
    <property type="term" value="F:protein homodimerization activity"/>
    <property type="evidence" value="ECO:0000314"/>
    <property type="project" value="UniProtKB"/>
</dbReference>
<dbReference type="GO" id="GO:0036109">
    <property type="term" value="P:alpha-linolenic acid metabolic process"/>
    <property type="evidence" value="ECO:0007669"/>
    <property type="project" value="Ensembl"/>
</dbReference>
<dbReference type="GO" id="GO:0042632">
    <property type="term" value="P:cholesterol homeostasis"/>
    <property type="evidence" value="ECO:0000316"/>
    <property type="project" value="UniProtKB"/>
</dbReference>
<dbReference type="GO" id="GO:0033540">
    <property type="term" value="P:fatty acid beta-oxidation using acyl-CoA oxidase"/>
    <property type="evidence" value="ECO:0000315"/>
    <property type="project" value="BHF-UCL"/>
</dbReference>
<dbReference type="GO" id="GO:0009062">
    <property type="term" value="P:fatty acid catabolic process"/>
    <property type="evidence" value="ECO:0000315"/>
    <property type="project" value="UniProtKB"/>
</dbReference>
<dbReference type="GO" id="GO:1901570">
    <property type="term" value="P:fatty acid derivative biosynthetic process"/>
    <property type="evidence" value="ECO:0007669"/>
    <property type="project" value="Ensembl"/>
</dbReference>
<dbReference type="GO" id="GO:0019395">
    <property type="term" value="P:fatty acid oxidation"/>
    <property type="evidence" value="ECO:0000315"/>
    <property type="project" value="UniProtKB"/>
</dbReference>
<dbReference type="GO" id="GO:0006091">
    <property type="term" value="P:generation of precursor metabolites and energy"/>
    <property type="evidence" value="ECO:0000315"/>
    <property type="project" value="UniProtKB"/>
</dbReference>
<dbReference type="GO" id="GO:0050665">
    <property type="term" value="P:hydrogen peroxide biosynthetic process"/>
    <property type="evidence" value="ECO:0000315"/>
    <property type="project" value="FlyBase"/>
</dbReference>
<dbReference type="GO" id="GO:0055088">
    <property type="term" value="P:lipid homeostasis"/>
    <property type="evidence" value="ECO:0000314"/>
    <property type="project" value="UniProtKB"/>
</dbReference>
<dbReference type="GO" id="GO:0006629">
    <property type="term" value="P:lipid metabolic process"/>
    <property type="evidence" value="ECO:0000314"/>
    <property type="project" value="UniProtKB"/>
</dbReference>
<dbReference type="GO" id="GO:0042759">
    <property type="term" value="P:long-chain fatty acid biosynthetic process"/>
    <property type="evidence" value="ECO:0007669"/>
    <property type="project" value="Ensembl"/>
</dbReference>
<dbReference type="GO" id="GO:0016559">
    <property type="term" value="P:peroxisome fission"/>
    <property type="evidence" value="ECO:0000316"/>
    <property type="project" value="UniProtKB"/>
</dbReference>
<dbReference type="GO" id="GO:0006693">
    <property type="term" value="P:prostaglandin metabolic process"/>
    <property type="evidence" value="ECO:0000315"/>
    <property type="project" value="UniProtKB"/>
</dbReference>
<dbReference type="GO" id="GO:0007283">
    <property type="term" value="P:spermatogenesis"/>
    <property type="evidence" value="ECO:0007669"/>
    <property type="project" value="Ensembl"/>
</dbReference>
<dbReference type="GO" id="GO:0006636">
    <property type="term" value="P:unsaturated fatty acid biosynthetic process"/>
    <property type="evidence" value="ECO:0007669"/>
    <property type="project" value="Ensembl"/>
</dbReference>
<dbReference type="GO" id="GO:0140493">
    <property type="term" value="P:very long-chain fatty acid beta-oxidation"/>
    <property type="evidence" value="ECO:0000315"/>
    <property type="project" value="UniProtKB"/>
</dbReference>
<dbReference type="GO" id="GO:0000038">
    <property type="term" value="P:very long-chain fatty acid metabolic process"/>
    <property type="evidence" value="ECO:0000315"/>
    <property type="project" value="BHF-UCL"/>
</dbReference>
<dbReference type="CDD" id="cd01150">
    <property type="entry name" value="AXO"/>
    <property type="match status" value="1"/>
</dbReference>
<dbReference type="FunFam" id="1.10.540.10:FF:000006">
    <property type="entry name" value="Acyl-coenzyme A oxidase"/>
    <property type="match status" value="1"/>
</dbReference>
<dbReference type="FunFam" id="1.20.140.10:FF:000005">
    <property type="entry name" value="Acyl-coenzyme A oxidase"/>
    <property type="match status" value="1"/>
</dbReference>
<dbReference type="FunFam" id="1.20.140.10:FF:000007">
    <property type="entry name" value="Acyl-coenzyme A oxidase"/>
    <property type="match status" value="1"/>
</dbReference>
<dbReference type="FunFam" id="2.40.110.10:FF:000003">
    <property type="entry name" value="Acyl-coenzyme A oxidase"/>
    <property type="match status" value="1"/>
</dbReference>
<dbReference type="Gene3D" id="1.10.540.10">
    <property type="entry name" value="Acyl-CoA dehydrogenase/oxidase, N-terminal domain"/>
    <property type="match status" value="1"/>
</dbReference>
<dbReference type="Gene3D" id="2.40.110.10">
    <property type="entry name" value="Butyryl-CoA Dehydrogenase, subunit A, domain 2"/>
    <property type="match status" value="1"/>
</dbReference>
<dbReference type="Gene3D" id="1.20.140.10">
    <property type="entry name" value="Butyryl-CoA Dehydrogenase, subunit A, domain 3"/>
    <property type="match status" value="2"/>
</dbReference>
<dbReference type="InterPro" id="IPR034171">
    <property type="entry name" value="ACO"/>
</dbReference>
<dbReference type="InterPro" id="IPR055060">
    <property type="entry name" value="ACOX_C_alpha1"/>
</dbReference>
<dbReference type="InterPro" id="IPR029320">
    <property type="entry name" value="Acyl-CoA_ox_N"/>
</dbReference>
<dbReference type="InterPro" id="IPR006091">
    <property type="entry name" value="Acyl-CoA_Oxase/DH_mid-dom"/>
</dbReference>
<dbReference type="InterPro" id="IPR046373">
    <property type="entry name" value="Acyl-CoA_Oxase/DH_mid-dom_sf"/>
</dbReference>
<dbReference type="InterPro" id="IPR012258">
    <property type="entry name" value="Acyl-CoA_oxidase"/>
</dbReference>
<dbReference type="InterPro" id="IPR002655">
    <property type="entry name" value="Acyl-CoA_oxidase_C"/>
</dbReference>
<dbReference type="InterPro" id="IPR036250">
    <property type="entry name" value="AcylCo_DH-like_C"/>
</dbReference>
<dbReference type="InterPro" id="IPR037069">
    <property type="entry name" value="AcylCoA_DH/ox_N_sf"/>
</dbReference>
<dbReference type="InterPro" id="IPR009100">
    <property type="entry name" value="AcylCoA_DH/oxidase_NM_dom_sf"/>
</dbReference>
<dbReference type="PANTHER" id="PTHR10909">
    <property type="entry name" value="ELECTRON TRANSPORT OXIDOREDUCTASE"/>
    <property type="match status" value="1"/>
</dbReference>
<dbReference type="PANTHER" id="PTHR10909:SF250">
    <property type="entry name" value="PEROXISOMAL ACYL-COENZYME A OXIDASE 1"/>
    <property type="match status" value="1"/>
</dbReference>
<dbReference type="Pfam" id="PF01756">
    <property type="entry name" value="ACOX"/>
    <property type="match status" value="1"/>
</dbReference>
<dbReference type="Pfam" id="PF22924">
    <property type="entry name" value="ACOX_C_alpha1"/>
    <property type="match status" value="1"/>
</dbReference>
<dbReference type="Pfam" id="PF02770">
    <property type="entry name" value="Acyl-CoA_dh_M"/>
    <property type="match status" value="1"/>
</dbReference>
<dbReference type="Pfam" id="PF14749">
    <property type="entry name" value="Acyl-CoA_ox_N"/>
    <property type="match status" value="1"/>
</dbReference>
<dbReference type="PIRSF" id="PIRSF000168">
    <property type="entry name" value="Acyl-CoA_oxidase"/>
    <property type="match status" value="1"/>
</dbReference>
<dbReference type="SUPFAM" id="SSF47203">
    <property type="entry name" value="Acyl-CoA dehydrogenase C-terminal domain-like"/>
    <property type="match status" value="2"/>
</dbReference>
<dbReference type="SUPFAM" id="SSF56645">
    <property type="entry name" value="Acyl-CoA dehydrogenase NM domain-like"/>
    <property type="match status" value="1"/>
</dbReference>
<proteinExistence type="evidence at protein level"/>
<organism>
    <name type="scientific">Homo sapiens</name>
    <name type="common">Human</name>
    <dbReference type="NCBI Taxonomy" id="9606"/>
    <lineage>
        <taxon>Eukaryota</taxon>
        <taxon>Metazoa</taxon>
        <taxon>Chordata</taxon>
        <taxon>Craniata</taxon>
        <taxon>Vertebrata</taxon>
        <taxon>Euteleostomi</taxon>
        <taxon>Mammalia</taxon>
        <taxon>Eutheria</taxon>
        <taxon>Euarchontoglires</taxon>
        <taxon>Primates</taxon>
        <taxon>Haplorrhini</taxon>
        <taxon>Catarrhini</taxon>
        <taxon>Hominidae</taxon>
        <taxon>Homo</taxon>
    </lineage>
</organism>
<gene>
    <name evidence="30" type="primary">ACOX1</name>
    <name type="synonym">ACOX</name>
</gene>
<reference key="1">
    <citation type="journal article" date="1994" name="Proc. Natl. Acad. Sci. U.S.A.">
        <title>Isolation of the human peroxisomal acyl-CoA oxidase gene: organization, promoter analysis, and chromosomal localization.</title>
        <authorList>
            <person name="Varanasi U."/>
            <person name="Chu R."/>
            <person name="Chu S."/>
            <person name="Espinosa R."/>
            <person name="Lebeau M.M."/>
            <person name="Reddy J.K."/>
        </authorList>
    </citation>
    <scope>NUCLEOTIDE SEQUENCE [GENOMIC DNA] (ISOFORMS 1 AND 2)</scope>
</reference>
<reference key="2">
    <citation type="journal article" date="1995" name="J. Biol. Chem.">
        <title>Overexpression and characterization of the human peroxisomal acyl-CoA oxidase in insect cells.</title>
        <authorList>
            <person name="Chu R."/>
            <person name="Varanasi U."/>
            <person name="Chu S."/>
            <person name="Lin Y."/>
            <person name="Usuda N."/>
            <person name="Rao M.S."/>
            <person name="Reddy J.K."/>
        </authorList>
    </citation>
    <scope>NUCLEOTIDE SEQUENCE [MRNA] (ISOFORM 1)</scope>
    <scope>FUNCTION</scope>
    <scope>CATALYTIC ACTIVITY (ISOFORM 1)</scope>
    <source>
        <tissue>Liver</tissue>
    </source>
</reference>
<reference key="3">
    <citation type="journal article" date="1994" name="J. Clin. Invest.">
        <title>Large deletion of the peroxisomal acyl-CoA oxidase gene in pseudoneonatal adrenoleukodystrophy.</title>
        <authorList>
            <person name="Fourner B."/>
            <person name="Saudubray J.-M."/>
            <person name="Benichou B."/>
            <person name="Lyonnet S."/>
            <person name="Munnich A."/>
            <person name="Clevers H."/>
            <person name="Poll-The B.T."/>
        </authorList>
    </citation>
    <scope>NUCLEOTIDE SEQUENCE [MRNA] (ISOFORM 2)</scope>
    <scope>VARIANT MET-312</scope>
    <scope>INVOLVEMENT IN PSEUDO-NALD</scope>
    <source>
        <tissue>Liver</tissue>
    </source>
</reference>
<reference key="4">
    <citation type="journal article" date="1994" name="Biochem. Biophys. Res. Commun.">
        <title>Molecular cloning and functional expression of a human peroxisomal acyl-coenzyme A oxidase.</title>
        <authorList>
            <person name="Aoyama T."/>
            <person name="Tsushima K."/>
            <person name="Souri M."/>
            <person name="Kamijo T."/>
            <person name="Suzuki Y."/>
            <person name="Shimozawa N."/>
            <person name="Orii T."/>
            <person name="Hashimoto T."/>
        </authorList>
    </citation>
    <scope>NUCLEOTIDE SEQUENCE [MRNA] (ISOFORM 1)</scope>
    <scope>VARIANT MET-312</scope>
    <source>
        <tissue>Liver</tissue>
    </source>
</reference>
<reference key="5">
    <citation type="journal article" date="2004" name="Nat. Genet.">
        <title>Complete sequencing and characterization of 21,243 full-length human cDNAs.</title>
        <authorList>
            <person name="Ota T."/>
            <person name="Suzuki Y."/>
            <person name="Nishikawa T."/>
            <person name="Otsuki T."/>
            <person name="Sugiyama T."/>
            <person name="Irie R."/>
            <person name="Wakamatsu A."/>
            <person name="Hayashi K."/>
            <person name="Sato H."/>
            <person name="Nagai K."/>
            <person name="Kimura K."/>
            <person name="Makita H."/>
            <person name="Sekine M."/>
            <person name="Obayashi M."/>
            <person name="Nishi T."/>
            <person name="Shibahara T."/>
            <person name="Tanaka T."/>
            <person name="Ishii S."/>
            <person name="Yamamoto J."/>
            <person name="Saito K."/>
            <person name="Kawai Y."/>
            <person name="Isono Y."/>
            <person name="Nakamura Y."/>
            <person name="Nagahari K."/>
            <person name="Murakami K."/>
            <person name="Yasuda T."/>
            <person name="Iwayanagi T."/>
            <person name="Wagatsuma M."/>
            <person name="Shiratori A."/>
            <person name="Sudo H."/>
            <person name="Hosoiri T."/>
            <person name="Kaku Y."/>
            <person name="Kodaira H."/>
            <person name="Kondo H."/>
            <person name="Sugawara M."/>
            <person name="Takahashi M."/>
            <person name="Kanda K."/>
            <person name="Yokoi T."/>
            <person name="Furuya T."/>
            <person name="Kikkawa E."/>
            <person name="Omura Y."/>
            <person name="Abe K."/>
            <person name="Kamihara K."/>
            <person name="Katsuta N."/>
            <person name="Sato K."/>
            <person name="Tanikawa M."/>
            <person name="Yamazaki M."/>
            <person name="Ninomiya K."/>
            <person name="Ishibashi T."/>
            <person name="Yamashita H."/>
            <person name="Murakawa K."/>
            <person name="Fujimori K."/>
            <person name="Tanai H."/>
            <person name="Kimata M."/>
            <person name="Watanabe M."/>
            <person name="Hiraoka S."/>
            <person name="Chiba Y."/>
            <person name="Ishida S."/>
            <person name="Ono Y."/>
            <person name="Takiguchi S."/>
            <person name="Watanabe S."/>
            <person name="Yosida M."/>
            <person name="Hotuta T."/>
            <person name="Kusano J."/>
            <person name="Kanehori K."/>
            <person name="Takahashi-Fujii A."/>
            <person name="Hara H."/>
            <person name="Tanase T.-O."/>
            <person name="Nomura Y."/>
            <person name="Togiya S."/>
            <person name="Komai F."/>
            <person name="Hara R."/>
            <person name="Takeuchi K."/>
            <person name="Arita M."/>
            <person name="Imose N."/>
            <person name="Musashino K."/>
            <person name="Yuuki H."/>
            <person name="Oshima A."/>
            <person name="Sasaki N."/>
            <person name="Aotsuka S."/>
            <person name="Yoshikawa Y."/>
            <person name="Matsunawa H."/>
            <person name="Ichihara T."/>
            <person name="Shiohata N."/>
            <person name="Sano S."/>
            <person name="Moriya S."/>
            <person name="Momiyama H."/>
            <person name="Satoh N."/>
            <person name="Takami S."/>
            <person name="Terashima Y."/>
            <person name="Suzuki O."/>
            <person name="Nakagawa S."/>
            <person name="Senoh A."/>
            <person name="Mizoguchi H."/>
            <person name="Goto Y."/>
            <person name="Shimizu F."/>
            <person name="Wakebe H."/>
            <person name="Hishigaki H."/>
            <person name="Watanabe T."/>
            <person name="Sugiyama A."/>
            <person name="Takemoto M."/>
            <person name="Kawakami B."/>
            <person name="Yamazaki M."/>
            <person name="Watanabe K."/>
            <person name="Kumagai A."/>
            <person name="Itakura S."/>
            <person name="Fukuzumi Y."/>
            <person name="Fujimori Y."/>
            <person name="Komiyama M."/>
            <person name="Tashiro H."/>
            <person name="Tanigami A."/>
            <person name="Fujiwara T."/>
            <person name="Ono T."/>
            <person name="Yamada K."/>
            <person name="Fujii Y."/>
            <person name="Ozaki K."/>
            <person name="Hirao M."/>
            <person name="Ohmori Y."/>
            <person name="Kawabata A."/>
            <person name="Hikiji T."/>
            <person name="Kobatake N."/>
            <person name="Inagaki H."/>
            <person name="Ikema Y."/>
            <person name="Okamoto S."/>
            <person name="Okitani R."/>
            <person name="Kawakami T."/>
            <person name="Noguchi S."/>
            <person name="Itoh T."/>
            <person name="Shigeta K."/>
            <person name="Senba T."/>
            <person name="Matsumura K."/>
            <person name="Nakajima Y."/>
            <person name="Mizuno T."/>
            <person name="Morinaga M."/>
            <person name="Sasaki M."/>
            <person name="Togashi T."/>
            <person name="Oyama M."/>
            <person name="Hata H."/>
            <person name="Watanabe M."/>
            <person name="Komatsu T."/>
            <person name="Mizushima-Sugano J."/>
            <person name="Satoh T."/>
            <person name="Shirai Y."/>
            <person name="Takahashi Y."/>
            <person name="Nakagawa K."/>
            <person name="Okumura K."/>
            <person name="Nagase T."/>
            <person name="Nomura N."/>
            <person name="Kikuchi H."/>
            <person name="Masuho Y."/>
            <person name="Yamashita R."/>
            <person name="Nakai K."/>
            <person name="Yada T."/>
            <person name="Nakamura Y."/>
            <person name="Ohara O."/>
            <person name="Isogai T."/>
            <person name="Sugano S."/>
        </authorList>
    </citation>
    <scope>NUCLEOTIDE SEQUENCE [LARGE SCALE MRNA] (ISOFORMS 1; 2 AND 3)</scope>
    <scope>VARIANT MET-312</scope>
    <source>
        <tissue>Placenta</tissue>
        <tissue>Thalamus</tissue>
        <tissue>Trachea</tissue>
    </source>
</reference>
<reference key="6">
    <citation type="journal article" date="2007" name="BMC Genomics">
        <title>The full-ORF clone resource of the German cDNA consortium.</title>
        <authorList>
            <person name="Bechtel S."/>
            <person name="Rosenfelder H."/>
            <person name="Duda A."/>
            <person name="Schmidt C.P."/>
            <person name="Ernst U."/>
            <person name="Wellenreuther R."/>
            <person name="Mehrle A."/>
            <person name="Schuster C."/>
            <person name="Bahr A."/>
            <person name="Bloecker H."/>
            <person name="Heubner D."/>
            <person name="Hoerlein A."/>
            <person name="Michel G."/>
            <person name="Wedler H."/>
            <person name="Koehrer K."/>
            <person name="Ottenwaelder B."/>
            <person name="Poustka A."/>
            <person name="Wiemann S."/>
            <person name="Schupp I."/>
        </authorList>
    </citation>
    <scope>NUCLEOTIDE SEQUENCE [LARGE SCALE MRNA] (ISOFORM 2)</scope>
    <scope>VARIANT MET-312</scope>
    <source>
        <tissue>Retina</tissue>
    </source>
</reference>
<reference key="7">
    <citation type="journal article" date="2006" name="Nature">
        <title>DNA sequence of human chromosome 17 and analysis of rearrangement in the human lineage.</title>
        <authorList>
            <person name="Zody M.C."/>
            <person name="Garber M."/>
            <person name="Adams D.J."/>
            <person name="Sharpe T."/>
            <person name="Harrow J."/>
            <person name="Lupski J.R."/>
            <person name="Nicholson C."/>
            <person name="Searle S.M."/>
            <person name="Wilming L."/>
            <person name="Young S.K."/>
            <person name="Abouelleil A."/>
            <person name="Allen N.R."/>
            <person name="Bi W."/>
            <person name="Bloom T."/>
            <person name="Borowsky M.L."/>
            <person name="Bugalter B.E."/>
            <person name="Butler J."/>
            <person name="Chang J.L."/>
            <person name="Chen C.-K."/>
            <person name="Cook A."/>
            <person name="Corum B."/>
            <person name="Cuomo C.A."/>
            <person name="de Jong P.J."/>
            <person name="DeCaprio D."/>
            <person name="Dewar K."/>
            <person name="FitzGerald M."/>
            <person name="Gilbert J."/>
            <person name="Gibson R."/>
            <person name="Gnerre S."/>
            <person name="Goldstein S."/>
            <person name="Grafham D.V."/>
            <person name="Grocock R."/>
            <person name="Hafez N."/>
            <person name="Hagopian D.S."/>
            <person name="Hart E."/>
            <person name="Norman C.H."/>
            <person name="Humphray S."/>
            <person name="Jaffe D.B."/>
            <person name="Jones M."/>
            <person name="Kamal M."/>
            <person name="Khodiyar V.K."/>
            <person name="LaButti K."/>
            <person name="Laird G."/>
            <person name="Lehoczky J."/>
            <person name="Liu X."/>
            <person name="Lokyitsang T."/>
            <person name="Loveland J."/>
            <person name="Lui A."/>
            <person name="Macdonald P."/>
            <person name="Major J.E."/>
            <person name="Matthews L."/>
            <person name="Mauceli E."/>
            <person name="McCarroll S.A."/>
            <person name="Mihalev A.H."/>
            <person name="Mudge J."/>
            <person name="Nguyen C."/>
            <person name="Nicol R."/>
            <person name="O'Leary S.B."/>
            <person name="Osoegawa K."/>
            <person name="Schwartz D.C."/>
            <person name="Shaw-Smith C."/>
            <person name="Stankiewicz P."/>
            <person name="Steward C."/>
            <person name="Swarbreck D."/>
            <person name="Venkataraman V."/>
            <person name="Whittaker C.A."/>
            <person name="Yang X."/>
            <person name="Zimmer A.R."/>
            <person name="Bradley A."/>
            <person name="Hubbard T."/>
            <person name="Birren B.W."/>
            <person name="Rogers J."/>
            <person name="Lander E.S."/>
            <person name="Nusbaum C."/>
        </authorList>
    </citation>
    <scope>NUCLEOTIDE SEQUENCE [LARGE SCALE GENOMIC DNA]</scope>
</reference>
<reference key="8">
    <citation type="submission" date="2005-07" db="EMBL/GenBank/DDBJ databases">
        <authorList>
            <person name="Mural R.J."/>
            <person name="Istrail S."/>
            <person name="Sutton G.G."/>
            <person name="Florea L."/>
            <person name="Halpern A.L."/>
            <person name="Mobarry C.M."/>
            <person name="Lippert R."/>
            <person name="Walenz B."/>
            <person name="Shatkay H."/>
            <person name="Dew I."/>
            <person name="Miller J.R."/>
            <person name="Flanigan M.J."/>
            <person name="Edwards N.J."/>
            <person name="Bolanos R."/>
            <person name="Fasulo D."/>
            <person name="Halldorsson B.V."/>
            <person name="Hannenhalli S."/>
            <person name="Turner R."/>
            <person name="Yooseph S."/>
            <person name="Lu F."/>
            <person name="Nusskern D.R."/>
            <person name="Shue B.C."/>
            <person name="Zheng X.H."/>
            <person name="Zhong F."/>
            <person name="Delcher A.L."/>
            <person name="Huson D.H."/>
            <person name="Kravitz S.A."/>
            <person name="Mouchard L."/>
            <person name="Reinert K."/>
            <person name="Remington K.A."/>
            <person name="Clark A.G."/>
            <person name="Waterman M.S."/>
            <person name="Eichler E.E."/>
            <person name="Adams M.D."/>
            <person name="Hunkapiller M.W."/>
            <person name="Myers E.W."/>
            <person name="Venter J.C."/>
        </authorList>
    </citation>
    <scope>NUCLEOTIDE SEQUENCE [LARGE SCALE GENOMIC DNA]</scope>
</reference>
<reference key="9">
    <citation type="journal article" date="2004" name="Genome Res.">
        <title>The status, quality, and expansion of the NIH full-length cDNA project: the Mammalian Gene Collection (MGC).</title>
        <authorList>
            <consortium name="The MGC Project Team"/>
        </authorList>
    </citation>
    <scope>NUCLEOTIDE SEQUENCE [LARGE SCALE MRNA] (ISOFORM 2)</scope>
    <scope>VARIANTS ILE-153 AND MET-312</scope>
    <source>
        <tissue>Colon</tissue>
        <tissue>Eye</tissue>
    </source>
</reference>
<reference key="10">
    <citation type="journal article" date="2004" name="J. Lipid Res.">
        <title>Identification of the peroxisomal beta-oxidation enzymes involved in the degradation of long-chain dicarboxylic acids.</title>
        <authorList>
            <person name="Ferdinandusse S."/>
            <person name="Denis S."/>
            <person name="Van Roermund C.W."/>
            <person name="Wanders R.J."/>
            <person name="Dacremont G."/>
        </authorList>
    </citation>
    <scope>FUNCTION</scope>
</reference>
<reference key="11">
    <citation type="journal article" date="2006" name="Cell">
        <title>Global, in vivo, and site-specific phosphorylation dynamics in signaling networks.</title>
        <authorList>
            <person name="Olsen J.V."/>
            <person name="Blagoev B."/>
            <person name="Gnad F."/>
            <person name="Macek B."/>
            <person name="Kumar C."/>
            <person name="Mortensen P."/>
            <person name="Mann M."/>
        </authorList>
    </citation>
    <scope>PHOSPHORYLATION [LARGE SCALE ANALYSIS] AT SER-26</scope>
    <scope>IDENTIFICATION BY MASS SPECTROMETRY [LARGE SCALE ANALYSIS]</scope>
    <source>
        <tissue>Cervix carcinoma</tissue>
    </source>
</reference>
<reference key="12">
    <citation type="journal article" date="2007" name="Biochem. Biophys. Res. Commun.">
        <title>Biochemical characterization of two functional human liver acyl-CoA oxidase isoforms 1a and 1b encoded by a single gene.</title>
        <authorList>
            <person name="Oaxaca-Castillo D."/>
            <person name="Andreoletti P."/>
            <person name="Vluggens A."/>
            <person name="Yu S."/>
            <person name="van Veldhoven P.P."/>
            <person name="Reddy J.K."/>
            <person name="Cherkaoui-Malki M."/>
        </authorList>
    </citation>
    <scope>FUNCTION (ISOFORMS 1 AND 2)</scope>
    <scope>COFACTOR</scope>
    <scope>BIOPHYSICOCHEMICAL PROPERTIES (ISOFORMS 1 AND 2)</scope>
    <scope>TISSUE SPECIFICITY</scope>
    <scope>CATALYTIC ACTIVITY (ISOFORMS 1 AND 2)</scope>
    <scope>PATHWAY</scope>
</reference>
<reference key="13">
    <citation type="journal article" date="2008" name="J. Biochem.">
        <title>Contribution of peroxisome-specific isoform of Lon protease in sorting PTS1 proteins to peroxisomes.</title>
        <authorList>
            <person name="Omi S."/>
            <person name="Nakata R."/>
            <person name="Okamura-Ikeda K."/>
            <person name="Konishi H."/>
            <person name="Taniguchi H."/>
        </authorList>
    </citation>
    <scope>INTERACTION WITH LONP2</scope>
</reference>
<reference key="14">
    <citation type="journal article" date="2008" name="Proc. Natl. Acad. Sci. U.S.A.">
        <title>A quantitative atlas of mitotic phosphorylation.</title>
        <authorList>
            <person name="Dephoure N."/>
            <person name="Zhou C."/>
            <person name="Villen J."/>
            <person name="Beausoleil S.A."/>
            <person name="Bakalarski C.E."/>
            <person name="Elledge S.J."/>
            <person name="Gygi S.P."/>
        </authorList>
    </citation>
    <scope>PHOSPHORYLATION [LARGE SCALE ANALYSIS] AT SER-26</scope>
    <scope>IDENTIFICATION BY MASS SPECTROMETRY [LARGE SCALE ANALYSIS]</scope>
    <source>
        <tissue>Cervix carcinoma</tissue>
    </source>
</reference>
<reference key="15">
    <citation type="journal article" date="2009" name="Science">
        <title>Lysine acetylation targets protein complexes and co-regulates major cellular functions.</title>
        <authorList>
            <person name="Choudhary C."/>
            <person name="Kumar C."/>
            <person name="Gnad F."/>
            <person name="Nielsen M.L."/>
            <person name="Rehman M."/>
            <person name="Walther T.C."/>
            <person name="Olsen J.V."/>
            <person name="Mann M."/>
        </authorList>
    </citation>
    <scope>ACETYLATION [LARGE SCALE ANALYSIS] AT LYS-255; LYS-267; LYS-437; LYS-500 AND LYS-504</scope>
    <scope>IDENTIFICATION BY MASS SPECTROMETRY [LARGE SCALE ANALYSIS]</scope>
</reference>
<reference key="16">
    <citation type="journal article" date="2010" name="Lab. Invest.">
        <title>Reversal of mouse Acyl-CoA oxidase 1 (ACOX1) null phenotype by human ACOX1b isoform.</title>
        <authorList>
            <person name="Vluggens A."/>
            <person name="Andreoletti P."/>
            <person name="Viswakarma N."/>
            <person name="Jia Y."/>
            <person name="Matsumoto K."/>
            <person name="Kulik W."/>
            <person name="Khan M."/>
            <person name="Huang J."/>
            <person name="Guo D."/>
            <person name="Yu S."/>
            <person name="Sarkar J."/>
            <person name="Singh I."/>
            <person name="Rao M.S."/>
            <person name="Wanders R.J."/>
            <person name="Reddy J.K."/>
            <person name="Cherkaoui-Malki M."/>
        </authorList>
    </citation>
    <scope>TISSUE SPECIFICITY</scope>
    <scope>CATALYTIC ACTIVITY (ISOFORMS 1 AND 2)</scope>
    <scope>REVERSAL OF ACOX1 NULL PHENOTYPE IN MOUSE</scope>
</reference>
<reference key="17">
    <citation type="journal article" date="2010" name="Lab. Invest.">
        <authorList>
            <person name="Vluggens A."/>
            <person name="Andreoletti P."/>
            <person name="Viswakarma N."/>
            <person name="Jia Y."/>
            <person name="Matsumoto K."/>
            <person name="Kulik W."/>
            <person name="Khan M."/>
            <person name="Huang J."/>
            <person name="Guo D."/>
            <person name="Yu S."/>
            <person name="Sarkar J."/>
            <person name="Singh I."/>
            <person name="Rao M.S."/>
            <person name="Wanders R.J."/>
            <person name="Reddy J.K."/>
            <person name="Cherkaoui-Malki M."/>
        </authorList>
    </citation>
    <scope>ERRATUM OF PUBMED:20195242</scope>
</reference>
<reference key="18">
    <citation type="journal article" date="2021" name="Brain Dev.">
        <title>Novel ACOX1 mutations in two siblings with peroxisomal acyl-CoA oxidase deficiency.</title>
        <authorList>
            <person name="Morita A."/>
            <person name="Enokizono T."/>
            <person name="Ohto T."/>
            <person name="Tanaka M."/>
            <person name="Watanabe S."/>
            <person name="Takada Y."/>
            <person name="Iwama K."/>
            <person name="Mizuguchi T."/>
            <person name="Matsumoto N."/>
            <person name="Morita M."/>
            <person name="Takashima S."/>
            <person name="Shimozawa N."/>
            <person name="Takada H."/>
        </authorList>
    </citation>
    <scope>CATALYTIC ACTIVITY</scope>
    <scope>VARIANT PSEUDO-NALD SER-420</scope>
    <scope>FUNCTION</scope>
</reference>
<reference key="19">
    <citation type="journal article" date="2011" name="BMC Syst. Biol.">
        <title>Initial characterization of the human central proteome.</title>
        <authorList>
            <person name="Burkard T.R."/>
            <person name="Planyavsky M."/>
            <person name="Kaupe I."/>
            <person name="Breitwieser F.P."/>
            <person name="Buerckstuemmer T."/>
            <person name="Bennett K.L."/>
            <person name="Superti-Furga G."/>
            <person name="Colinge J."/>
        </authorList>
    </citation>
    <scope>IDENTIFICATION BY MASS SPECTROMETRY [LARGE SCALE ANALYSIS]</scope>
</reference>
<reference key="20">
    <citation type="journal article" date="2013" name="J. Proteome Res.">
        <title>Toward a comprehensive characterization of a human cancer cell phosphoproteome.</title>
        <authorList>
            <person name="Zhou H."/>
            <person name="Di Palma S."/>
            <person name="Preisinger C."/>
            <person name="Peng M."/>
            <person name="Polat A.N."/>
            <person name="Heck A.J."/>
            <person name="Mohammed S."/>
        </authorList>
    </citation>
    <scope>PHOSPHORYLATION [LARGE SCALE ANALYSIS] AT SER-26</scope>
    <scope>IDENTIFICATION BY MASS SPECTROMETRY [LARGE SCALE ANALYSIS]</scope>
    <source>
        <tissue>Erythroleukemia</tissue>
    </source>
</reference>
<reference key="21">
    <citation type="journal article" date="2014" name="J. Proteomics">
        <title>An enzyme assisted RP-RPLC approach for in-depth analysis of human liver phosphoproteome.</title>
        <authorList>
            <person name="Bian Y."/>
            <person name="Song C."/>
            <person name="Cheng K."/>
            <person name="Dong M."/>
            <person name="Wang F."/>
            <person name="Huang J."/>
            <person name="Sun D."/>
            <person name="Wang L."/>
            <person name="Ye M."/>
            <person name="Zou H."/>
        </authorList>
    </citation>
    <scope>PHOSPHORYLATION [LARGE SCALE ANALYSIS] AT SER-26</scope>
    <scope>IDENTIFICATION BY MASS SPECTROMETRY [LARGE SCALE ANALYSIS]</scope>
    <source>
        <tissue>Liver</tissue>
    </source>
</reference>
<reference key="22">
    <citation type="journal article" date="2015" name="Proteomics">
        <title>N-terminome analysis of the human mitochondrial proteome.</title>
        <authorList>
            <person name="Vaca Jacome A.S."/>
            <person name="Rabilloud T."/>
            <person name="Schaeffer-Reiss C."/>
            <person name="Rompais M."/>
            <person name="Ayoub D."/>
            <person name="Lane L."/>
            <person name="Bairoch A."/>
            <person name="Van Dorsselaer A."/>
            <person name="Carapito C."/>
        </authorList>
    </citation>
    <scope>IDENTIFICATION BY MASS SPECTROMETRY [LARGE SCALE ANALYSIS]</scope>
</reference>
<reference key="23">
    <citation type="journal article" date="2002" name="J. Pediatr.">
        <title>Peroxisomal acyl-CoA oxidase deficiency.</title>
        <authorList>
            <person name="Suzuki Y."/>
            <person name="Iai M."/>
            <person name="Kamei A."/>
            <person name="Tanabe Y."/>
            <person name="Chida S."/>
            <person name="Yamaguchi S."/>
            <person name="Zhang Z."/>
            <person name="Takemoto Y."/>
            <person name="Shimozawa N."/>
            <person name="Kondo N."/>
        </authorList>
    </citation>
    <scope>VARIANTS PSEUDO-NALD CYS-178 AND VAL-278</scope>
</reference>
<reference key="24">
    <citation type="journal article" date="2007" name="Hum. Mutat.">
        <title>Clinical, biochemical, and mutational spectrum of peroxisomal acyl-coenzyme A oxidase deficiency.</title>
        <authorList>
            <person name="Ferdinandusse S."/>
            <person name="Denis S."/>
            <person name="Hogenhout E.M."/>
            <person name="Koster J."/>
            <person name="van Roermund C.W."/>
            <person name="Ijlst L."/>
            <person name="Moser A.B."/>
            <person name="Wanders R.J."/>
            <person name="Waterham H.R."/>
        </authorList>
    </citation>
    <scope>VARIANTS PSEUDO-NALD VAL-64 DEL; CYS-178; LEU-184; VAL-231; VAL-278; ARG-309 AND PRO-310</scope>
    <scope>FUNCTION</scope>
</reference>
<reference key="25">
    <citation type="journal article" date="2020" name="Neuron">
        <title>Loss- or Gain-of-Function Mutations in ACOX1 Cause Axonal Loss via Different Mechanisms.</title>
        <authorList>
            <consortium name="Members of Undiagnosed Diseases Network"/>
            <person name="Chung H.L."/>
            <person name="Wangler M.F."/>
            <person name="Marcogliese P.C."/>
            <person name="Jo J."/>
            <person name="Ravenscroft T.A."/>
            <person name="Zuo Z."/>
            <person name="Duraine L."/>
            <person name="Sadeghzadeh S."/>
            <person name="Li-Kroeger D."/>
            <person name="Schmidt R.E."/>
            <person name="Pestronk A."/>
            <person name="Rosenfeld J.A."/>
            <person name="Burrage L."/>
            <person name="Herndon M.J."/>
            <person name="Chen S."/>
            <person name="Shillington A."/>
            <person name="Vawter-Lee M."/>
            <person name="Hopkin R."/>
            <person name="Rodriguez-Smith J."/>
            <person name="Henrickson M."/>
            <person name="Lee B."/>
            <person name="Moser A.B."/>
            <person name="Jones R.O."/>
            <person name="Watkins P."/>
            <person name="Yoo T."/>
            <person name="Mar S."/>
            <person name="Choi M."/>
            <person name="Bucelli R.C."/>
            <person name="Yamamoto S."/>
            <person name="Lee H.K."/>
            <person name="Prada C.E."/>
            <person name="Chae J.H."/>
            <person name="Vogel T.P."/>
            <person name="Bellen H.J."/>
        </authorList>
    </citation>
    <scope>INVOLVEMENT IN MITCH</scope>
    <scope>VARIANT MITCH SER-237</scope>
    <scope>CHARACTERIZATION OF VARIANT MITCH SER-237</scope>
    <scope>SUBCELLULAR LOCATION</scope>
    <scope>SUBUNIT</scope>
    <scope>FUNCTION</scope>
</reference>
<comment type="function">
    <text evidence="6 8 9 13 14 15">Involved in the initial and rate-limiting step of peroxisomal beta-oxidation of straight-chain saturated and unsaturated very-long-chain fatty acids (PubMed:15060085, PubMed:17458872, PubMed:17603022, PubMed:32169171, PubMed:33234382, PubMed:7876265). Catalyzes the desaturation of fatty acyl-CoAs such as palmitoyl-CoA (hexadecanoyl-CoA) to 2-trans-enoyl-CoAs ((2E)-enoyl-CoAs) such as (2E)-hexadecenoyl-CoA, and donates electrons directly to molecular oxygen (O(2)), thereby producing hydrogen peroxide (H(2)O(2)) (PubMed:17458872, PubMed:17603022, PubMed:7876265).</text>
</comment>
<comment type="function">
    <molecule>Isoform 1</molecule>
    <text evidence="9">Shows highest activity against medium-chain fatty acyl-CoAs. Shows optimum activity with a chain length of 10 carbons (decanoyl-CoA) in vitro.</text>
</comment>
<comment type="function">
    <molecule>Isoform 2</molecule>
    <text evidence="9">Is active against a much broader range of substrates and shows activity towards long-chain fatty acyl-CoAs.</text>
</comment>
<comment type="catalytic activity">
    <reaction evidence="28">
        <text>a 2,3-saturated acyl-CoA + O2 = a (2E)-enoyl-CoA + H2O2</text>
        <dbReference type="Rhea" id="RHEA:38959"/>
        <dbReference type="ChEBI" id="CHEBI:15379"/>
        <dbReference type="ChEBI" id="CHEBI:16240"/>
        <dbReference type="ChEBI" id="CHEBI:58856"/>
        <dbReference type="ChEBI" id="CHEBI:65111"/>
        <dbReference type="EC" id="1.3.3.6"/>
    </reaction>
    <physiologicalReaction direction="left-to-right" evidence="28">
        <dbReference type="Rhea" id="RHEA:38960"/>
    </physiologicalReaction>
</comment>
<comment type="catalytic activity">
    <molecule>Isoform 1</molecule>
    <reaction evidence="9 12 15">
        <text>a 2,3-saturated acyl-CoA + O2 = a (2E)-enoyl-CoA + H2O2</text>
        <dbReference type="Rhea" id="RHEA:38959"/>
        <dbReference type="ChEBI" id="CHEBI:15379"/>
        <dbReference type="ChEBI" id="CHEBI:16240"/>
        <dbReference type="ChEBI" id="CHEBI:58856"/>
        <dbReference type="ChEBI" id="CHEBI:65111"/>
        <dbReference type="EC" id="1.3.3.6"/>
    </reaction>
    <physiologicalReaction direction="left-to-right" evidence="26 27 29">
        <dbReference type="Rhea" id="RHEA:38960"/>
    </physiologicalReaction>
</comment>
<comment type="catalytic activity">
    <molecule>Isoform 2</molecule>
    <reaction evidence="9 12">
        <text>a 2,3-saturated acyl-CoA + O2 = a (2E)-enoyl-CoA + H2O2</text>
        <dbReference type="Rhea" id="RHEA:38959"/>
        <dbReference type="ChEBI" id="CHEBI:15379"/>
        <dbReference type="ChEBI" id="CHEBI:16240"/>
        <dbReference type="ChEBI" id="CHEBI:58856"/>
        <dbReference type="ChEBI" id="CHEBI:65111"/>
        <dbReference type="EC" id="1.3.3.6"/>
    </reaction>
    <physiologicalReaction direction="left-to-right" evidence="26 27">
        <dbReference type="Rhea" id="RHEA:38960"/>
    </physiologicalReaction>
</comment>
<comment type="catalytic activity">
    <molecule>Isoform 1</molecule>
    <reaction evidence="9 12 15">
        <text>hexadecanoyl-CoA + O2 = (2E)-hexadecenoyl-CoA + H2O2</text>
        <dbReference type="Rhea" id="RHEA:40167"/>
        <dbReference type="ChEBI" id="CHEBI:15379"/>
        <dbReference type="ChEBI" id="CHEBI:16240"/>
        <dbReference type="ChEBI" id="CHEBI:57379"/>
        <dbReference type="ChEBI" id="CHEBI:61526"/>
    </reaction>
    <physiologicalReaction direction="left-to-right" evidence="26 27 29">
        <dbReference type="Rhea" id="RHEA:40168"/>
    </physiologicalReaction>
</comment>
<comment type="catalytic activity">
    <molecule>Isoform 2</molecule>
    <reaction evidence="9 12">
        <text>hexadecanoyl-CoA + O2 = (2E)-hexadecenoyl-CoA + H2O2</text>
        <dbReference type="Rhea" id="RHEA:40167"/>
        <dbReference type="ChEBI" id="CHEBI:15379"/>
        <dbReference type="ChEBI" id="CHEBI:16240"/>
        <dbReference type="ChEBI" id="CHEBI:57379"/>
        <dbReference type="ChEBI" id="CHEBI:61526"/>
    </reaction>
    <physiologicalReaction direction="left-to-right" evidence="26 27">
        <dbReference type="Rhea" id="RHEA:40168"/>
    </physiologicalReaction>
</comment>
<comment type="catalytic activity">
    <molecule>Isoform 1</molecule>
    <reaction evidence="9">
        <text>dodecanoyl-CoA + O2 = (2E)-dodecenoyl-CoA + H2O2</text>
        <dbReference type="Rhea" id="RHEA:40171"/>
        <dbReference type="ChEBI" id="CHEBI:15379"/>
        <dbReference type="ChEBI" id="CHEBI:16240"/>
        <dbReference type="ChEBI" id="CHEBI:57330"/>
        <dbReference type="ChEBI" id="CHEBI:57375"/>
    </reaction>
    <physiologicalReaction direction="left-to-right" evidence="26">
        <dbReference type="Rhea" id="RHEA:40172"/>
    </physiologicalReaction>
</comment>
<comment type="catalytic activity">
    <molecule>Isoform 2</molecule>
    <reaction evidence="9">
        <text>dodecanoyl-CoA + O2 = (2E)-dodecenoyl-CoA + H2O2</text>
        <dbReference type="Rhea" id="RHEA:40171"/>
        <dbReference type="ChEBI" id="CHEBI:15379"/>
        <dbReference type="ChEBI" id="CHEBI:16240"/>
        <dbReference type="ChEBI" id="CHEBI:57330"/>
        <dbReference type="ChEBI" id="CHEBI:57375"/>
    </reaction>
    <physiologicalReaction direction="left-to-right" evidence="26">
        <dbReference type="Rhea" id="RHEA:40172"/>
    </physiologicalReaction>
</comment>
<comment type="catalytic activity">
    <molecule>Isoform 1</molecule>
    <reaction evidence="9">
        <text>octanoyl-CoA + O2 = (2E)-octenoyl-CoA + H2O2</text>
        <dbReference type="Rhea" id="RHEA:40175"/>
        <dbReference type="ChEBI" id="CHEBI:15379"/>
        <dbReference type="ChEBI" id="CHEBI:16240"/>
        <dbReference type="ChEBI" id="CHEBI:57386"/>
        <dbReference type="ChEBI" id="CHEBI:62242"/>
    </reaction>
    <physiologicalReaction direction="left-to-right" evidence="26">
        <dbReference type="Rhea" id="RHEA:40176"/>
    </physiologicalReaction>
</comment>
<comment type="catalytic activity">
    <molecule>Isoform 2</molecule>
    <reaction evidence="9">
        <text>octanoyl-CoA + O2 = (2E)-octenoyl-CoA + H2O2</text>
        <dbReference type="Rhea" id="RHEA:40175"/>
        <dbReference type="ChEBI" id="CHEBI:15379"/>
        <dbReference type="ChEBI" id="CHEBI:16240"/>
        <dbReference type="ChEBI" id="CHEBI:57386"/>
        <dbReference type="ChEBI" id="CHEBI:62242"/>
    </reaction>
    <physiologicalReaction direction="left-to-right" evidence="26">
        <dbReference type="Rhea" id="RHEA:40176"/>
    </physiologicalReaction>
</comment>
<comment type="catalytic activity">
    <molecule>Isoform 1</molecule>
    <reaction evidence="9">
        <text>decanoyl-CoA + O2 = (2E)-decenoyl-CoA + H2O2</text>
        <dbReference type="Rhea" id="RHEA:40179"/>
        <dbReference type="ChEBI" id="CHEBI:15379"/>
        <dbReference type="ChEBI" id="CHEBI:16240"/>
        <dbReference type="ChEBI" id="CHEBI:61406"/>
        <dbReference type="ChEBI" id="CHEBI:61430"/>
    </reaction>
    <physiologicalReaction direction="left-to-right" evidence="26">
        <dbReference type="Rhea" id="RHEA:40180"/>
    </physiologicalReaction>
</comment>
<comment type="catalytic activity">
    <molecule>Isoform 2</molecule>
    <reaction evidence="9">
        <text>decanoyl-CoA + O2 = (2E)-decenoyl-CoA + H2O2</text>
        <dbReference type="Rhea" id="RHEA:40179"/>
        <dbReference type="ChEBI" id="CHEBI:15379"/>
        <dbReference type="ChEBI" id="CHEBI:16240"/>
        <dbReference type="ChEBI" id="CHEBI:61406"/>
        <dbReference type="ChEBI" id="CHEBI:61430"/>
    </reaction>
    <physiologicalReaction direction="left-to-right" evidence="26">
        <dbReference type="Rhea" id="RHEA:40180"/>
    </physiologicalReaction>
</comment>
<comment type="catalytic activity">
    <molecule>Isoform 2</molecule>
    <reaction evidence="9">
        <text>tetradecanoyl-CoA + O2 = (2E)-tetradecenoyl-CoA + H2O2</text>
        <dbReference type="Rhea" id="RHEA:40183"/>
        <dbReference type="ChEBI" id="CHEBI:15379"/>
        <dbReference type="ChEBI" id="CHEBI:16240"/>
        <dbReference type="ChEBI" id="CHEBI:57385"/>
        <dbReference type="ChEBI" id="CHEBI:61405"/>
    </reaction>
    <physiologicalReaction direction="left-to-right" evidence="26">
        <dbReference type="Rhea" id="RHEA:40184"/>
    </physiologicalReaction>
</comment>
<comment type="catalytic activity">
    <molecule>Isoform 1</molecule>
    <reaction evidence="9">
        <text>hexadecanedioyl-CoA + O2 = (2E)-hexadecenedioyl-CoA + H2O2</text>
        <dbReference type="Rhea" id="RHEA:40275"/>
        <dbReference type="ChEBI" id="CHEBI:15379"/>
        <dbReference type="ChEBI" id="CHEBI:16240"/>
        <dbReference type="ChEBI" id="CHEBI:77075"/>
        <dbReference type="ChEBI" id="CHEBI:77085"/>
    </reaction>
    <physiologicalReaction direction="left-to-right" evidence="26">
        <dbReference type="Rhea" id="RHEA:40276"/>
    </physiologicalReaction>
</comment>
<comment type="catalytic activity">
    <molecule>Isoform 2</molecule>
    <reaction evidence="9">
        <text>hexadecanedioyl-CoA + O2 = (2E)-hexadecenedioyl-CoA + H2O2</text>
        <dbReference type="Rhea" id="RHEA:40275"/>
        <dbReference type="ChEBI" id="CHEBI:15379"/>
        <dbReference type="ChEBI" id="CHEBI:16240"/>
        <dbReference type="ChEBI" id="CHEBI:77075"/>
        <dbReference type="ChEBI" id="CHEBI:77085"/>
    </reaction>
    <physiologicalReaction direction="left-to-right" evidence="26">
        <dbReference type="Rhea" id="RHEA:40276"/>
    </physiologicalReaction>
</comment>
<comment type="catalytic activity">
    <molecule>Isoform 1</molecule>
    <reaction evidence="9">
        <text>(5Z,8Z,11Z,14Z,17Z)-eicosapentaenoyl-CoA + O2 = (2E,5Z,8Z,11Z,14Z,17Z)-icosahexaenoyl-CoA + H2O2</text>
        <dbReference type="Rhea" id="RHEA:69643"/>
        <dbReference type="ChEBI" id="CHEBI:15379"/>
        <dbReference type="ChEBI" id="CHEBI:16240"/>
        <dbReference type="ChEBI" id="CHEBI:73862"/>
        <dbReference type="ChEBI" id="CHEBI:187901"/>
    </reaction>
    <physiologicalReaction direction="left-to-right" evidence="26">
        <dbReference type="Rhea" id="RHEA:69644"/>
    </physiologicalReaction>
</comment>
<comment type="catalytic activity">
    <molecule>Isoform 2</molecule>
    <reaction evidence="9">
        <text>(5Z,8Z,11Z,14Z,17Z)-eicosapentaenoyl-CoA + O2 = (2E,5Z,8Z,11Z,14Z,17Z)-icosahexaenoyl-CoA + H2O2</text>
        <dbReference type="Rhea" id="RHEA:69643"/>
        <dbReference type="ChEBI" id="CHEBI:15379"/>
        <dbReference type="ChEBI" id="CHEBI:16240"/>
        <dbReference type="ChEBI" id="CHEBI:73862"/>
        <dbReference type="ChEBI" id="CHEBI:187901"/>
    </reaction>
    <physiologicalReaction direction="left-to-right" evidence="26">
        <dbReference type="Rhea" id="RHEA:69644"/>
    </physiologicalReaction>
</comment>
<comment type="catalytic activity">
    <reaction evidence="28">
        <text>tetracosanoyl-CoA + O2 = (2E)-tetracosenoyl-CoA + H2O2</text>
        <dbReference type="Rhea" id="RHEA:40319"/>
        <dbReference type="ChEBI" id="CHEBI:15379"/>
        <dbReference type="ChEBI" id="CHEBI:16240"/>
        <dbReference type="ChEBI" id="CHEBI:65052"/>
        <dbReference type="ChEBI" id="CHEBI:74693"/>
    </reaction>
    <physiologicalReaction direction="left-to-right" evidence="28">
        <dbReference type="Rhea" id="RHEA:40320"/>
    </physiologicalReaction>
</comment>
<comment type="catalytic activity">
    <reaction evidence="1">
        <text>glutaryl-CoA + O2 = (2E)-glutaconyl-CoA + H2O2</text>
        <dbReference type="Rhea" id="RHEA:40315"/>
        <dbReference type="ChEBI" id="CHEBI:15379"/>
        <dbReference type="ChEBI" id="CHEBI:16240"/>
        <dbReference type="ChEBI" id="CHEBI:57353"/>
        <dbReference type="ChEBI" id="CHEBI:57378"/>
    </reaction>
    <physiologicalReaction direction="left-to-right" evidence="1">
        <dbReference type="Rhea" id="RHEA:40316"/>
    </physiologicalReaction>
</comment>
<comment type="catalytic activity">
    <reaction evidence="1">
        <text>hexanoyl-CoA + O2 = (2E)-hexenoyl-CoA + H2O2</text>
        <dbReference type="Rhea" id="RHEA:40311"/>
        <dbReference type="ChEBI" id="CHEBI:15379"/>
        <dbReference type="ChEBI" id="CHEBI:16240"/>
        <dbReference type="ChEBI" id="CHEBI:62077"/>
        <dbReference type="ChEBI" id="CHEBI:62620"/>
    </reaction>
    <physiologicalReaction direction="left-to-right" evidence="1">
        <dbReference type="Rhea" id="RHEA:40312"/>
    </physiologicalReaction>
</comment>
<comment type="catalytic activity">
    <reaction evidence="1">
        <text>octadecanoyl-CoA + O2 = (2E)-octadecenoyl-CoA + H2O2</text>
        <dbReference type="Rhea" id="RHEA:38971"/>
        <dbReference type="ChEBI" id="CHEBI:15379"/>
        <dbReference type="ChEBI" id="CHEBI:16240"/>
        <dbReference type="ChEBI" id="CHEBI:57394"/>
        <dbReference type="ChEBI" id="CHEBI:71412"/>
    </reaction>
    <physiologicalReaction direction="left-to-right" evidence="1">
        <dbReference type="Rhea" id="RHEA:38972"/>
    </physiologicalReaction>
</comment>
<comment type="catalytic activity">
    <reaction evidence="2">
        <text>(6Z,9Z,12Z,15Z,18Z,21Z)-tetracosahexaenoyl-CoA + O2 = (2E,6Z,9Z,12Z,15Z,18Z,21Z)-tetracosaheptaenoyl-CoA + H2O2</text>
        <dbReference type="Rhea" id="RHEA:39119"/>
        <dbReference type="ChEBI" id="CHEBI:15379"/>
        <dbReference type="ChEBI" id="CHEBI:16240"/>
        <dbReference type="ChEBI" id="CHEBI:74086"/>
        <dbReference type="ChEBI" id="CHEBI:76360"/>
    </reaction>
    <physiologicalReaction direction="left-to-right" evidence="2">
        <dbReference type="Rhea" id="RHEA:39120"/>
    </physiologicalReaction>
</comment>
<comment type="cofactor">
    <cofactor evidence="9">
        <name>FAD</name>
        <dbReference type="ChEBI" id="CHEBI:57692"/>
    </cofactor>
</comment>
<comment type="biophysicochemical properties">
    <molecule>Isoform 1</molecule>
    <kinetics>
        <KM evidence="9">73 uM for hexadecanoyl-CoA (palmitoyl-CoA)</KM>
    </kinetics>
    <phDependence>
        <text evidence="9">Optimum pH is 8.5.</text>
    </phDependence>
    <temperatureDependence>
        <text evidence="9">Optimum temperature at pH 7.5 is 40 degrees Celsius with no activity at 50 degrees Celsius.</text>
    </temperatureDependence>
</comment>
<comment type="biophysicochemical properties">
    <molecule>Isoform 2</molecule>
    <kinetics>
        <KM evidence="9">90 uM for hexadecanoyl-CoA (palmitoyl-CoA)</KM>
    </kinetics>
    <phDependence>
        <text evidence="9">Optimum pH is 7.5-8.5.</text>
    </phDependence>
    <temperatureDependence>
        <text evidence="9">Optimum temperature at pH 7.5 is 47.5 degrees Celsius with 57% activity retained at 50 degrees Celsius.</text>
    </temperatureDependence>
</comment>
<comment type="pathway">
    <text evidence="26">Lipid metabolism; peroxisomal fatty acid beta-oxidation.</text>
</comment>
<comment type="subunit">
    <text evidence="11 13">Homodimer (PubMed:32169171). Interacts with LONP2 (PubMed:18281296).</text>
</comment>
<comment type="subcellular location">
    <subcellularLocation>
        <location evidence="13">Peroxisome</location>
    </subcellularLocation>
</comment>
<comment type="alternative products">
    <event type="alternative splicing"/>
    <isoform>
        <id>Q15067-1</id>
        <name>1</name>
        <name>ACOX1a</name>
        <name>SCOX-exon 3I</name>
        <sequence type="displayed"/>
    </isoform>
    <isoform>
        <id>Q15067-2</id>
        <name>2</name>
        <name>ACOX1b</name>
        <name>SCOX-exon 3II</name>
        <sequence type="described" ref="VSP_000146"/>
    </isoform>
    <isoform>
        <id>Q15067-3</id>
        <name>3</name>
        <sequence type="described" ref="VSP_046129 VSP_000146"/>
    </isoform>
</comment>
<comment type="tissue specificity">
    <text evidence="9 12">Widely expressed with highest levels of isoform 1 and isoform 2 detected in testis. Isoform 1 is expressed at higher levels than isoform 2 in liver and kidney while isoform 2 levels are higher in brain, lung, muscle, white adipose tissue and testis. Levels are almost equal in heart.</text>
</comment>
<comment type="disease" evidence="4 8 14 16">
    <disease id="DI-00049">
        <name>Adrenoleukodystrophy, pseudoneonatal</name>
        <acronym>Pseudo-NALD</acronym>
        <description>A peroxisomal single-enzyme disorder of fatty acid beta-oxidation, resulting in clinical manifestations that remind neonatal adrenoleukodystrophy. Clinical features include intellectual disability, leukodystrophy, seizures, mild hepatomegaly, hearing deficit. Pseudo-NALD is characterized by increased plasma levels of very-long chain fatty acids, due to decreased or absent peroxisome acyl-CoA oxidase activity. Peroxisomes are intact and functioning.</description>
        <dbReference type="MIM" id="264470"/>
    </disease>
    <text>The disease is caused by variants affecting the gene represented in this entry.</text>
</comment>
<comment type="disease" evidence="13">
    <disease id="DI-05884">
        <name>Mitchell syndrome</name>
        <acronym>MITCH</acronym>
        <description>A disorder characterized by episodic demyelination, sensorimotor polyneuropathy, and sensorineural hearing loss.</description>
        <dbReference type="MIM" id="618960"/>
    </disease>
    <text>The gene represented in this entry is involved in disease pathogenesis.</text>
</comment>
<comment type="miscellaneous">
    <text evidence="27">Isoform 1 and isoform 2 can reverse the Acox1 null phenotype in mouse which is characterized by severe microvesicular hepatic steatosis, sustained activation of PPARA, spontaneous massive peroxisome proliferation and eventual development of hepatocellular carcinomas. Isoform 2 is more effective in reversal of the phenotype than isoform 1 (PubMed:20195242).</text>
</comment>
<comment type="similarity">
    <text evidence="25">Belongs to the acyl-CoA oxidase family.</text>
</comment>
<comment type="sequence caution" evidence="25">
    <conflict type="erroneous initiation">
        <sequence resource="EMBL-CDS" id="CAD97622"/>
    </conflict>
    <text>Extended N-terminus.</text>
</comment>
<evidence type="ECO:0000250" key="1">
    <source>
        <dbReference type="UniProtKB" id="P07872"/>
    </source>
</evidence>
<evidence type="ECO:0000250" key="2">
    <source>
        <dbReference type="UniProtKB" id="Q9R0H0"/>
    </source>
</evidence>
<evidence type="ECO:0000255" key="3"/>
<evidence type="ECO:0000269" key="4">
    <source>
    </source>
</evidence>
<evidence type="ECO:0000269" key="5">
    <source>
    </source>
</evidence>
<evidence type="ECO:0000269" key="6">
    <source>
    </source>
</evidence>
<evidence type="ECO:0000269" key="7">
    <source>
    </source>
</evidence>
<evidence type="ECO:0000269" key="8">
    <source>
    </source>
</evidence>
<evidence type="ECO:0000269" key="9">
    <source>
    </source>
</evidence>
<evidence type="ECO:0000269" key="10">
    <source>
    </source>
</evidence>
<evidence type="ECO:0000269" key="11">
    <source>
    </source>
</evidence>
<evidence type="ECO:0000269" key="12">
    <source>
    </source>
</evidence>
<evidence type="ECO:0000269" key="13">
    <source>
    </source>
</evidence>
<evidence type="ECO:0000269" key="14">
    <source>
    </source>
</evidence>
<evidence type="ECO:0000269" key="15">
    <source>
    </source>
</evidence>
<evidence type="ECO:0000269" key="16">
    <source>
    </source>
</evidence>
<evidence type="ECO:0000269" key="17">
    <source>
    </source>
</evidence>
<evidence type="ECO:0000303" key="18">
    <source>
    </source>
</evidence>
<evidence type="ECO:0000303" key="19">
    <source>
    </source>
</evidence>
<evidence type="ECO:0000303" key="20">
    <source>
    </source>
</evidence>
<evidence type="ECO:0000303" key="21">
    <source>
    </source>
</evidence>
<evidence type="ECO:0000303" key="22">
    <source>
    </source>
</evidence>
<evidence type="ECO:0000303" key="23">
    <source>
    </source>
</evidence>
<evidence type="ECO:0000303" key="24">
    <source>
    </source>
</evidence>
<evidence type="ECO:0000305" key="25"/>
<evidence type="ECO:0000305" key="26">
    <source>
    </source>
</evidence>
<evidence type="ECO:0000305" key="27">
    <source>
    </source>
</evidence>
<evidence type="ECO:0000305" key="28">
    <source>
    </source>
</evidence>
<evidence type="ECO:0000305" key="29">
    <source>
    </source>
</evidence>
<evidence type="ECO:0000312" key="30">
    <source>
        <dbReference type="HGNC" id="HGNC:119"/>
    </source>
</evidence>
<evidence type="ECO:0007744" key="31">
    <source>
    </source>
</evidence>
<evidence type="ECO:0007744" key="32">
    <source>
    </source>
</evidence>
<evidence type="ECO:0007744" key="33">
    <source>
    </source>
</evidence>
<evidence type="ECO:0007744" key="34">
    <source>
    </source>
</evidence>
<evidence type="ECO:0007744" key="35">
    <source>
    </source>
</evidence>
<accession>Q15067</accession>
<accession>A8K6X8</accession>
<accession>A8KAA0</accession>
<accession>B4DK61</accession>
<accession>F5GYQ8</accession>
<accession>Q12863</accession>
<accession>Q15068</accession>
<accession>Q15101</accession>
<accession>Q16131</accession>
<accession>Q7Z3W5</accession>
<accession>Q9UD31</accession>
<name>ACOX1_HUMAN</name>
<sequence length="660" mass="74424">MNPDLRRERDSASFNPELLTHILDGSPEKTRRRREIENMILNDPDFQHEDLNFLTRSQRYEVAVRKSAIMVKKMREFGIADPDEIMWFKKLHLVNFVEPVGLNYSMFIPTLLNQGTTAQKEKWLLSSKGLQIIGTYAQTEMGHGTHLRGLETTATYDPETQEFILNSPTVTSIKWWPGGLGKTSNHAIVLAQLITKGKCYGLHAFIVPIREIGTHKPLPGITVGDIGPKFGYDEIDNGYLKMDNHRIPRENMLMKYAQVKPDGTYVKPLSNKLTYGTMVFVRSFLVGEAARALSKACTIAIRYSAVRHQSEIKPGEPEPQILDFQTQQYKLFPLLATAYAFQFVGAYMKETYHRINEGIGQGDLSELPELHALTAGLKAFTSWTANTGIEACRMACGGHGYSHCSGLPNIYVNFTPSCTFEGENTVMMLQTARFLMKSYDQVHSGKLVCGMVSYLNDLPSQRIQPQQVAVWPTMVDINSPESLTEAYKLRAARLVEIAAKNLQKEVIHRKSKEVAWNLTSVDLVRASEAHCHYVVVKLFSEKLLKIQDKAIQAVLRSLCLLYSLYGISQNAGDFLQGSIMTEPQITQVNQRVKELLTLIRSDAVALVDAFDFQDVTLGSVLGRYDGNVYENLFEWAKNSPLNKAEVHESYKHLKSLQSKL</sequence>
<protein>
    <recommendedName>
        <fullName evidence="24">Peroxisomal acyl-coenzyme A oxidase 1</fullName>
        <shortName evidence="24">AOX</shortName>
        <ecNumber evidence="9 12 15 28">1.3.3.6</ecNumber>
    </recommendedName>
    <alternativeName>
        <fullName evidence="18 22">Palmitoyl-CoA oxidase</fullName>
    </alternativeName>
    <alternativeName>
        <fullName>Peroxisomal fatty acyl-CoA oxidase</fullName>
    </alternativeName>
    <alternativeName>
        <fullName evidence="19">Straight-chain acyl-CoA oxidase</fullName>
        <shortName evidence="19">SCOX</shortName>
    </alternativeName>
    <component>
        <recommendedName>
            <fullName evidence="1">Peroxisomal acyl-CoA oxidase 1, A chain</fullName>
        </recommendedName>
    </component>
    <component>
        <recommendedName>
            <fullName evidence="1">Peroxisomal acyl-CoA oxidase 1, B chain</fullName>
        </recommendedName>
    </component>
    <component>
        <recommendedName>
            <fullName evidence="1">Peroxisomal acyl-CoA oxidase 1, C chain</fullName>
        </recommendedName>
    </component>
</protein>
<feature type="chain" id="PRO_0000204677" description="Peroxisomal acyl-CoA oxidase 1, A chain">
    <location>
        <begin position="1"/>
        <end position="660"/>
    </location>
</feature>
<feature type="chain" id="PRO_0000447500" description="Peroxisomal acyl-CoA oxidase 1, B chain" evidence="1">
    <location>
        <begin position="1"/>
        <end position="468"/>
    </location>
</feature>
<feature type="chain" id="PRO_0000447501" description="Peroxisomal acyl-CoA oxidase 1, C chain" evidence="1">
    <location>
        <begin position="469"/>
        <end position="660"/>
    </location>
</feature>
<feature type="short sequence motif" description="Microbody targeting signal" evidence="3">
    <location>
        <begin position="658"/>
        <end position="660"/>
    </location>
</feature>
<feature type="active site" description="Proton acceptor" evidence="1">
    <location>
        <position position="421"/>
    </location>
</feature>
<feature type="binding site" evidence="1">
    <location>
        <position position="139"/>
    </location>
    <ligand>
        <name>FAD</name>
        <dbReference type="ChEBI" id="CHEBI:57692"/>
    </ligand>
</feature>
<feature type="binding site" evidence="1">
    <location>
        <position position="178"/>
    </location>
    <ligand>
        <name>FAD</name>
        <dbReference type="ChEBI" id="CHEBI:57692"/>
    </ligand>
</feature>
<feature type="site" description="Cleavage" evidence="1">
    <location>
        <begin position="468"/>
        <end position="469"/>
    </location>
</feature>
<feature type="modified residue" description="Phosphoserine" evidence="31 32 34 35">
    <location>
        <position position="26"/>
    </location>
</feature>
<feature type="modified residue" description="N6-succinyllysine" evidence="2">
    <location>
        <position position="89"/>
    </location>
</feature>
<feature type="modified residue" description="N6-succinyllysine" evidence="2">
    <location>
        <position position="90"/>
    </location>
</feature>
<feature type="modified residue" description="N6-acetyllysine" evidence="2">
    <location>
        <position position="216"/>
    </location>
</feature>
<feature type="modified residue" description="N6-succinyllysine" evidence="2">
    <location>
        <position position="241"/>
    </location>
</feature>
<feature type="modified residue" description="N6-acetyllysine" evidence="33">
    <location>
        <position position="255"/>
    </location>
</feature>
<feature type="modified residue" description="N6-acetyllysine" evidence="33">
    <location>
        <position position="267"/>
    </location>
</feature>
<feature type="modified residue" description="N6-acetyllysine" evidence="2">
    <location>
        <position position="272"/>
    </location>
</feature>
<feature type="modified residue" description="N6-succinyllysine" evidence="2">
    <location>
        <position position="349"/>
    </location>
</feature>
<feature type="modified residue" description="N6-acetyllysine; alternate" evidence="33">
    <location>
        <position position="437"/>
    </location>
</feature>
<feature type="modified residue" description="N6-succinyllysine; alternate" evidence="2">
    <location>
        <position position="437"/>
    </location>
</feature>
<feature type="modified residue" description="N6-acetyllysine; alternate" evidence="2">
    <location>
        <position position="446"/>
    </location>
</feature>
<feature type="modified residue" description="N6-succinyllysine; alternate" evidence="2">
    <location>
        <position position="446"/>
    </location>
</feature>
<feature type="modified residue" description="N6-acetyllysine" evidence="33">
    <location>
        <position position="500"/>
    </location>
</feature>
<feature type="modified residue" description="N6-acetyllysine" evidence="33">
    <location>
        <position position="504"/>
    </location>
</feature>
<feature type="modified residue" description="N6-acetyllysine; alternate" evidence="2">
    <location>
        <position position="512"/>
    </location>
</feature>
<feature type="modified residue" description="N6-succinyllysine; alternate" evidence="2">
    <location>
        <position position="512"/>
    </location>
</feature>
<feature type="modified residue" description="N6-succinyllysine" evidence="2">
    <location>
        <position position="542"/>
    </location>
</feature>
<feature type="modified residue" description="N6-acetyllysine; alternate" evidence="2">
    <location>
        <position position="637"/>
    </location>
</feature>
<feature type="modified residue" description="N6-succinyllysine; alternate" evidence="2">
    <location>
        <position position="637"/>
    </location>
</feature>
<feature type="modified residue" description="N6-succinyllysine" evidence="2">
    <location>
        <position position="643"/>
    </location>
</feature>
<feature type="modified residue" description="Phosphoserine" evidence="2">
    <location>
        <position position="649"/>
    </location>
</feature>
<feature type="modified residue" description="N6-acetyllysine" evidence="2">
    <location>
        <position position="651"/>
    </location>
</feature>
<feature type="modified residue" description="N6-succinyllysine" evidence="2">
    <location>
        <position position="654"/>
    </location>
</feature>
<feature type="splice variant" id="VSP_046129" description="In isoform 3." evidence="18">
    <location>
        <begin position="1"/>
        <end position="38"/>
    </location>
</feature>
<feature type="splice variant" id="VSP_000146" description="In isoform 2 and isoform 3." evidence="18 20 21 23">
    <original>KLHLVNFVEPVGLNYSMFIPTLLNQGTTAQKEKWLLSSKGLQ</original>
    <variation>NFVHRGRPEPLDLHLGMFLPTLLHQATAEQQERFFMPAWNLE</variation>
    <location>
        <begin position="90"/>
        <end position="131"/>
    </location>
</feature>
<feature type="sequence variant" id="VAR_067040" description="In pseudo-NALD." evidence="8">
    <location>
        <position position="64"/>
    </location>
</feature>
<feature type="sequence variant" id="VAR_048182" description="In dbSNP:rs3744032.">
    <original>G</original>
    <variation>S</variation>
    <location>
        <position position="101"/>
    </location>
</feature>
<feature type="sequence variant" id="VAR_030619" description="In dbSNP:rs17855420." evidence="7">
    <original>T</original>
    <variation>I</variation>
    <location>
        <position position="153"/>
    </location>
</feature>
<feature type="sequence variant" id="VAR_025789" description="In pseudo-NALD; dbSNP:rs118204091." evidence="4 8">
    <original>G</original>
    <variation>C</variation>
    <location>
        <position position="178"/>
    </location>
</feature>
<feature type="sequence variant" id="VAR_067041" description="In pseudo-NALD; dbSNP:rs780887410." evidence="8">
    <original>S</original>
    <variation>L</variation>
    <location>
        <position position="184"/>
    </location>
</feature>
<feature type="sequence variant" id="VAR_067042" description="In pseudo-NALD." evidence="8">
    <original>G</original>
    <variation>V</variation>
    <location>
        <position position="231"/>
    </location>
</feature>
<feature type="sequence variant" id="VAR_083893" description="In MITCH; gain-of-function; increased dimerization; increased protein levels and peroxisomal acyl-coenzyme A oxidase function; increased levels of reactive oxygen species; no effect on VLCFA levels; no effect on peroxisome location; causes Schwann cell death and myelination defects; dbSNP:rs1567876984." evidence="13">
    <original>N</original>
    <variation>S</variation>
    <location>
        <position position="237"/>
    </location>
</feature>
<feature type="sequence variant" id="VAR_025790" description="In pseudo-NALD; dbSNP:rs118204090." evidence="4 8">
    <original>M</original>
    <variation>V</variation>
    <location>
        <position position="278"/>
    </location>
</feature>
<feature type="sequence variant" id="VAR_067043" description="In pseudo-NALD; dbSNP:rs118204092." evidence="8">
    <original>Q</original>
    <variation>R</variation>
    <location>
        <position position="309"/>
    </location>
</feature>
<feature type="sequence variant" id="VAR_067044" description="In pseudo-NALD; dbSNP:rs758962364." evidence="8">
    <original>S</original>
    <variation>P</variation>
    <location>
        <position position="310"/>
    </location>
</feature>
<feature type="sequence variant" id="VAR_021529" description="In dbSNP:rs1135640." evidence="5 7 10 16 17">
    <original>I</original>
    <variation>M</variation>
    <location>
        <position position="312"/>
    </location>
</feature>
<feature type="sequence variant" id="VAR_085887" description="In Pseudo-NALD; uncertain significance." evidence="14">
    <original>F</original>
    <variation>S</variation>
    <location>
        <position position="420"/>
    </location>
</feature>
<feature type="sequence conflict" description="In Ref. 3; CAA50574." evidence="25" ref="3">
    <original>P</original>
    <variation>L</variation>
    <location>
        <position position="27"/>
    </location>
</feature>
<feature type="sequence conflict" description="In Ref. 3; CAA50574." evidence="25" ref="3">
    <original>A</original>
    <variation>R</variation>
    <location>
        <position position="80"/>
    </location>
</feature>
<feature type="sequence conflict" description="In Ref. 6; CAD97622." evidence="25" ref="6">
    <original>E</original>
    <variation>D</variation>
    <location>
        <position position="84"/>
    </location>
</feature>
<feature type="sequence conflict" description="In Ref. 4; AAB30019." evidence="25" ref="4">
    <original>Q</original>
    <variation>E</variation>
    <location>
        <position position="119"/>
    </location>
</feature>
<feature type="sequence conflict" description="In Ref. 2; AAA18595." evidence="25" ref="2">
    <original>Y</original>
    <variation>H</variation>
    <location>
        <position position="200"/>
    </location>
</feature>
<feature type="sequence conflict" description="In Ref. 1; AAA19113/AAA19114 and 2; AAA18595." evidence="25" ref="1 2">
    <original>IG</original>
    <variation>NR</variation>
    <location>
        <begin position="212"/>
        <end position="213"/>
    </location>
</feature>
<feature type="sequence conflict" description="In Ref. 1; AAA19113/AAA19114 and 2; AAA18595." evidence="25" ref="1 2">
    <original>T</original>
    <variation>P</variation>
    <location>
        <position position="264"/>
    </location>
</feature>
<feature type="sequence conflict" description="In Ref. 2; AAA18595." evidence="25" ref="2">
    <original>F</original>
    <variation>L</variation>
    <location>
        <position position="332"/>
    </location>
</feature>
<feature type="sequence conflict" description="In Ref. 2; AAA18595." evidence="25" ref="2">
    <original>C</original>
    <variation>R</variation>
    <location>
        <position position="449"/>
    </location>
</feature>
<feature type="sequence conflict" description="In Ref. 5; BAF85654." evidence="25" ref="5">
    <original>R</original>
    <variation>L</variation>
    <location>
        <position position="490"/>
    </location>
</feature>
<feature type="sequence conflict" description="In Ref. 1; AAA19113/AAA19114 and 2; AAA18595." evidence="25" ref="1 2">
    <original>C</original>
    <variation>L</variation>
    <location>
        <position position="531"/>
    </location>
</feature>
<feature type="sequence conflict" description="In Ref. 1; AAA19113/AAA19114 and 2; AAA18595." evidence="25" ref="1 2">
    <original>VV</original>
    <variation>GL</variation>
    <location>
        <begin position="534"/>
        <end position="535"/>
    </location>
</feature>
<feature type="sequence conflict" description="In Ref. 3; CAA50574." evidence="25" ref="3">
    <original>V</original>
    <variation>A</variation>
    <location>
        <position position="615"/>
    </location>
</feature>
<feature type="sequence conflict" description="In Ref. 4; AAB30019." evidence="25" ref="4">
    <original>Y</original>
    <variation>YH</variation>
    <location>
        <position position="650"/>
    </location>
</feature>
<keyword id="KW-0007">Acetylation</keyword>
<keyword id="KW-0025">Alternative splicing</keyword>
<keyword id="KW-0209">Deafness</keyword>
<keyword id="KW-0225">Disease variant</keyword>
<keyword id="KW-0274">FAD</keyword>
<keyword id="KW-0276">Fatty acid metabolism</keyword>
<keyword id="KW-0285">Flavoprotein</keyword>
<keyword id="KW-0443">Lipid metabolism</keyword>
<keyword id="KW-0622">Neuropathy</keyword>
<keyword id="KW-0560">Oxidoreductase</keyword>
<keyword id="KW-0576">Peroxisome</keyword>
<keyword id="KW-0597">Phosphoprotein</keyword>
<keyword id="KW-1267">Proteomics identification</keyword>
<keyword id="KW-1185">Reference proteome</keyword>